<dbReference type="EC" id="5.4.99.25" evidence="1"/>
<dbReference type="EMBL" id="AM408590">
    <property type="protein sequence ID" value="CAL72799.1"/>
    <property type="molecule type" value="Genomic_DNA"/>
</dbReference>
<dbReference type="RefSeq" id="WP_003414147.1">
    <property type="nucleotide sequence ID" value="NC_008769.1"/>
</dbReference>
<dbReference type="SMR" id="A1KMD6"/>
<dbReference type="KEGG" id="mbb:BCG_2811c"/>
<dbReference type="HOGENOM" id="CLU_032087_0_0_11"/>
<dbReference type="Proteomes" id="UP000001472">
    <property type="component" value="Chromosome"/>
</dbReference>
<dbReference type="GO" id="GO:0003723">
    <property type="term" value="F:RNA binding"/>
    <property type="evidence" value="ECO:0007669"/>
    <property type="project" value="InterPro"/>
</dbReference>
<dbReference type="GO" id="GO:0160148">
    <property type="term" value="F:tRNA pseudouridine(55) synthase activity"/>
    <property type="evidence" value="ECO:0007669"/>
    <property type="project" value="UniProtKB-EC"/>
</dbReference>
<dbReference type="GO" id="GO:1990481">
    <property type="term" value="P:mRNA pseudouridine synthesis"/>
    <property type="evidence" value="ECO:0007669"/>
    <property type="project" value="TreeGrafter"/>
</dbReference>
<dbReference type="GO" id="GO:0031119">
    <property type="term" value="P:tRNA pseudouridine synthesis"/>
    <property type="evidence" value="ECO:0007669"/>
    <property type="project" value="UniProtKB-UniRule"/>
</dbReference>
<dbReference type="CDD" id="cd02573">
    <property type="entry name" value="PseudoU_synth_EcTruB"/>
    <property type="match status" value="1"/>
</dbReference>
<dbReference type="FunFam" id="3.30.2350.10:FF:000011">
    <property type="entry name" value="tRNA pseudouridine synthase B"/>
    <property type="match status" value="1"/>
</dbReference>
<dbReference type="Gene3D" id="3.30.2350.10">
    <property type="entry name" value="Pseudouridine synthase"/>
    <property type="match status" value="1"/>
</dbReference>
<dbReference type="Gene3D" id="2.30.130.10">
    <property type="entry name" value="PUA domain"/>
    <property type="match status" value="1"/>
</dbReference>
<dbReference type="HAMAP" id="MF_01080">
    <property type="entry name" value="TruB_bact"/>
    <property type="match status" value="1"/>
</dbReference>
<dbReference type="InterPro" id="IPR020103">
    <property type="entry name" value="PsdUridine_synth_cat_dom_sf"/>
</dbReference>
<dbReference type="InterPro" id="IPR002501">
    <property type="entry name" value="PsdUridine_synth_N"/>
</dbReference>
<dbReference type="InterPro" id="IPR015947">
    <property type="entry name" value="PUA-like_sf"/>
</dbReference>
<dbReference type="InterPro" id="IPR036974">
    <property type="entry name" value="PUA_sf"/>
</dbReference>
<dbReference type="InterPro" id="IPR015225">
    <property type="entry name" value="tRNA_psdUridine_synth_fam2_C"/>
</dbReference>
<dbReference type="InterPro" id="IPR014780">
    <property type="entry name" value="tRNA_psdUridine_synth_TruB"/>
</dbReference>
<dbReference type="InterPro" id="IPR032819">
    <property type="entry name" value="TruB_C"/>
</dbReference>
<dbReference type="NCBIfam" id="TIGR00431">
    <property type="entry name" value="TruB"/>
    <property type="match status" value="1"/>
</dbReference>
<dbReference type="PANTHER" id="PTHR13767:SF2">
    <property type="entry name" value="PSEUDOURIDYLATE SYNTHASE TRUB1"/>
    <property type="match status" value="1"/>
</dbReference>
<dbReference type="PANTHER" id="PTHR13767">
    <property type="entry name" value="TRNA-PSEUDOURIDINE SYNTHASE"/>
    <property type="match status" value="1"/>
</dbReference>
<dbReference type="Pfam" id="PF09142">
    <property type="entry name" value="TruB_C"/>
    <property type="match status" value="1"/>
</dbReference>
<dbReference type="Pfam" id="PF16198">
    <property type="entry name" value="TruB_C_2"/>
    <property type="match status" value="1"/>
</dbReference>
<dbReference type="Pfam" id="PF01509">
    <property type="entry name" value="TruB_N"/>
    <property type="match status" value="1"/>
</dbReference>
<dbReference type="SUPFAM" id="SSF55120">
    <property type="entry name" value="Pseudouridine synthase"/>
    <property type="match status" value="1"/>
</dbReference>
<dbReference type="SUPFAM" id="SSF88697">
    <property type="entry name" value="PUA domain-like"/>
    <property type="match status" value="1"/>
</dbReference>
<comment type="function">
    <text evidence="1">Responsible for synthesis of pseudouridine from uracil-55 in the psi GC loop of transfer RNAs.</text>
</comment>
<comment type="catalytic activity">
    <reaction evidence="1">
        <text>uridine(55) in tRNA = pseudouridine(55) in tRNA</text>
        <dbReference type="Rhea" id="RHEA:42532"/>
        <dbReference type="Rhea" id="RHEA-COMP:10101"/>
        <dbReference type="Rhea" id="RHEA-COMP:10102"/>
        <dbReference type="ChEBI" id="CHEBI:65314"/>
        <dbReference type="ChEBI" id="CHEBI:65315"/>
        <dbReference type="EC" id="5.4.99.25"/>
    </reaction>
</comment>
<comment type="similarity">
    <text evidence="1">Belongs to the pseudouridine synthase TruB family. Type 1 subfamily.</text>
</comment>
<organism>
    <name type="scientific">Mycobacterium bovis (strain BCG / Pasteur 1173P2)</name>
    <dbReference type="NCBI Taxonomy" id="410289"/>
    <lineage>
        <taxon>Bacteria</taxon>
        <taxon>Bacillati</taxon>
        <taxon>Actinomycetota</taxon>
        <taxon>Actinomycetes</taxon>
        <taxon>Mycobacteriales</taxon>
        <taxon>Mycobacteriaceae</taxon>
        <taxon>Mycobacterium</taxon>
        <taxon>Mycobacterium tuberculosis complex</taxon>
    </lineage>
</organism>
<reference key="1">
    <citation type="journal article" date="2007" name="Proc. Natl. Acad. Sci. U.S.A.">
        <title>Genome plasticity of BCG and impact on vaccine efficacy.</title>
        <authorList>
            <person name="Brosch R."/>
            <person name="Gordon S.V."/>
            <person name="Garnier T."/>
            <person name="Eiglmeier K."/>
            <person name="Frigui W."/>
            <person name="Valenti P."/>
            <person name="Dos Santos S."/>
            <person name="Duthoy S."/>
            <person name="Lacroix C."/>
            <person name="Garcia-Pelayo C."/>
            <person name="Inwald J.K."/>
            <person name="Golby P."/>
            <person name="Garcia J.N."/>
            <person name="Hewinson R.G."/>
            <person name="Behr M.A."/>
            <person name="Quail M.A."/>
            <person name="Churcher C."/>
            <person name="Barrell B.G."/>
            <person name="Parkhill J."/>
            <person name="Cole S.T."/>
        </authorList>
    </citation>
    <scope>NUCLEOTIDE SEQUENCE [LARGE SCALE GENOMIC DNA]</scope>
    <source>
        <strain>BCG / Pasteur 1173P2</strain>
    </source>
</reference>
<keyword id="KW-0413">Isomerase</keyword>
<keyword id="KW-0819">tRNA processing</keyword>
<proteinExistence type="inferred from homology"/>
<evidence type="ECO:0000255" key="1">
    <source>
        <dbReference type="HAMAP-Rule" id="MF_01080"/>
    </source>
</evidence>
<sequence>MSATGPGIVVIDKPAGMTSHDVVGRCRRIFATRRVGHAGTLDPMATGVLVIGIERATKILGLLTAAPKSYAATIRLGQTTSTEDAEGQVLQSVPAKHLTIEAIDAAMERLRGEIRQVPSSVSAIKVGGRRAYRLARQGRSVQLEARPIRIDRFELLAARRRDQLIDIDVEIDCSSGTYIRALARDLGDALGVGGHVTALRRTRVGRFELDQARSLDDLAERPALSLSLDEACLLMFARRDLTAAEASAAANGRSLPAVGIDGVYAACDADGRVIALLRDEGSRTRSVAVLRPATMHPG</sequence>
<accession>A1KMD6</accession>
<name>TRUB_MYCBP</name>
<feature type="chain" id="PRO_1000084627" description="tRNA pseudouridine synthase B">
    <location>
        <begin position="1"/>
        <end position="298"/>
    </location>
</feature>
<feature type="active site" description="Nucleophile" evidence="1">
    <location>
        <position position="42"/>
    </location>
</feature>
<gene>
    <name evidence="1" type="primary">truB</name>
    <name type="ordered locus">BCG_2811c</name>
</gene>
<protein>
    <recommendedName>
        <fullName evidence="1">tRNA pseudouridine synthase B</fullName>
        <ecNumber evidence="1">5.4.99.25</ecNumber>
    </recommendedName>
    <alternativeName>
        <fullName evidence="1">tRNA pseudouridine(55) synthase</fullName>
        <shortName evidence="1">Psi55 synthase</shortName>
    </alternativeName>
    <alternativeName>
        <fullName evidence="1">tRNA pseudouridylate synthase</fullName>
    </alternativeName>
    <alternativeName>
        <fullName evidence="1">tRNA-uridine isomerase</fullName>
    </alternativeName>
</protein>